<sequence>MAELTIDPATIRKALDDFVEAYTPSETPTQEVGHVATAGDGIAHVTGLPGCMANELLTFEDGTLGLAFNLDAREIGVVILGDFVGIEEGQEVRRTGEVLSVPVGDGFLGRVVDPLGRPIDGMGEIKSEGRRILEAQAPDVMHRHPVDQPMSTGLKAIDAMTPIGRGQRQLIIGDRQTGKTAIAIDTIINQKKNWESGDPKKQVRCIYVAIGQKGSTIASVKQSLEEAGAMEYTTIVASPASDSAGFKYIAPYTGSAIGQHWMYNGKDVLIVFDDLSKQAEAYRSISLLLRRPPGREAYPGDVFYLHSRLLERCARVSDDLGGGSMTGLPIVETKANDVSAYIPTNVISITDGQIFLQSDLFNAGQRPAVDVGISVSRVGGAAQTKALKKVSGTLKISLARYRSLESFAMFASDLDAASKAQLNRGARLTELLKQPQFSPYSMEQEVVSVWAGTHGKFDDLAIADVLPFEHGLLEYVDRNTDILTTIRDTGDFTKETEEALDKAVDAFRETYVTKAGKPLVDKKTAPKSVTPVDQEQIKAGKAQEKK</sequence>
<proteinExistence type="inferred from homology"/>
<name>ATPA_BIFA0</name>
<dbReference type="EC" id="7.1.2.2" evidence="1"/>
<dbReference type="EMBL" id="CP001213">
    <property type="protein sequence ID" value="ACL28925.1"/>
    <property type="molecule type" value="Genomic_DNA"/>
</dbReference>
<dbReference type="RefSeq" id="WP_004219176.1">
    <property type="nucleotide sequence ID" value="NC_011835.1"/>
</dbReference>
<dbReference type="SMR" id="B8DWS4"/>
<dbReference type="STRING" id="442563.BLA_0632"/>
<dbReference type="GeneID" id="29696592"/>
<dbReference type="KEGG" id="bla:BLA_0632"/>
<dbReference type="PATRIC" id="fig|442563.4.peg.663"/>
<dbReference type="HOGENOM" id="CLU_010091_2_1_11"/>
<dbReference type="Proteomes" id="UP000002456">
    <property type="component" value="Chromosome"/>
</dbReference>
<dbReference type="GO" id="GO:0005886">
    <property type="term" value="C:plasma membrane"/>
    <property type="evidence" value="ECO:0007669"/>
    <property type="project" value="UniProtKB-SubCell"/>
</dbReference>
<dbReference type="GO" id="GO:0045259">
    <property type="term" value="C:proton-transporting ATP synthase complex"/>
    <property type="evidence" value="ECO:0007669"/>
    <property type="project" value="UniProtKB-KW"/>
</dbReference>
<dbReference type="GO" id="GO:0043531">
    <property type="term" value="F:ADP binding"/>
    <property type="evidence" value="ECO:0007669"/>
    <property type="project" value="TreeGrafter"/>
</dbReference>
<dbReference type="GO" id="GO:0005524">
    <property type="term" value="F:ATP binding"/>
    <property type="evidence" value="ECO:0007669"/>
    <property type="project" value="UniProtKB-UniRule"/>
</dbReference>
<dbReference type="GO" id="GO:0046933">
    <property type="term" value="F:proton-transporting ATP synthase activity, rotational mechanism"/>
    <property type="evidence" value="ECO:0007669"/>
    <property type="project" value="UniProtKB-UniRule"/>
</dbReference>
<dbReference type="CDD" id="cd18113">
    <property type="entry name" value="ATP-synt_F1_alpha_C"/>
    <property type="match status" value="1"/>
</dbReference>
<dbReference type="CDD" id="cd18116">
    <property type="entry name" value="ATP-synt_F1_alpha_N"/>
    <property type="match status" value="1"/>
</dbReference>
<dbReference type="CDD" id="cd01132">
    <property type="entry name" value="F1-ATPase_alpha_CD"/>
    <property type="match status" value="1"/>
</dbReference>
<dbReference type="FunFam" id="1.20.150.20:FF:000001">
    <property type="entry name" value="ATP synthase subunit alpha"/>
    <property type="match status" value="1"/>
</dbReference>
<dbReference type="FunFam" id="3.40.50.300:FF:000002">
    <property type="entry name" value="ATP synthase subunit alpha"/>
    <property type="match status" value="1"/>
</dbReference>
<dbReference type="Gene3D" id="2.40.30.20">
    <property type="match status" value="1"/>
</dbReference>
<dbReference type="Gene3D" id="1.20.150.20">
    <property type="entry name" value="ATP synthase alpha/beta chain, C-terminal domain"/>
    <property type="match status" value="1"/>
</dbReference>
<dbReference type="Gene3D" id="3.40.50.300">
    <property type="entry name" value="P-loop containing nucleotide triphosphate hydrolases"/>
    <property type="match status" value="1"/>
</dbReference>
<dbReference type="HAMAP" id="MF_01346">
    <property type="entry name" value="ATP_synth_alpha_bact"/>
    <property type="match status" value="1"/>
</dbReference>
<dbReference type="InterPro" id="IPR023366">
    <property type="entry name" value="ATP_synth_asu-like_sf"/>
</dbReference>
<dbReference type="InterPro" id="IPR000793">
    <property type="entry name" value="ATP_synth_asu_C"/>
</dbReference>
<dbReference type="InterPro" id="IPR038376">
    <property type="entry name" value="ATP_synth_asu_C_sf"/>
</dbReference>
<dbReference type="InterPro" id="IPR033732">
    <property type="entry name" value="ATP_synth_F1_a_nt-bd_dom"/>
</dbReference>
<dbReference type="InterPro" id="IPR005294">
    <property type="entry name" value="ATP_synth_F1_asu"/>
</dbReference>
<dbReference type="InterPro" id="IPR020003">
    <property type="entry name" value="ATPase_a/bsu_AS"/>
</dbReference>
<dbReference type="InterPro" id="IPR004100">
    <property type="entry name" value="ATPase_F1/V1/A1_a/bsu_N"/>
</dbReference>
<dbReference type="InterPro" id="IPR036121">
    <property type="entry name" value="ATPase_F1/V1/A1_a/bsu_N_sf"/>
</dbReference>
<dbReference type="InterPro" id="IPR000194">
    <property type="entry name" value="ATPase_F1/V1/A1_a/bsu_nucl-bd"/>
</dbReference>
<dbReference type="InterPro" id="IPR027417">
    <property type="entry name" value="P-loop_NTPase"/>
</dbReference>
<dbReference type="NCBIfam" id="TIGR00962">
    <property type="entry name" value="atpA"/>
    <property type="match status" value="1"/>
</dbReference>
<dbReference type="NCBIfam" id="NF009884">
    <property type="entry name" value="PRK13343.1"/>
    <property type="match status" value="1"/>
</dbReference>
<dbReference type="PANTHER" id="PTHR48082">
    <property type="entry name" value="ATP SYNTHASE SUBUNIT ALPHA, MITOCHONDRIAL"/>
    <property type="match status" value="1"/>
</dbReference>
<dbReference type="PANTHER" id="PTHR48082:SF2">
    <property type="entry name" value="ATP SYNTHASE SUBUNIT ALPHA, MITOCHONDRIAL"/>
    <property type="match status" value="1"/>
</dbReference>
<dbReference type="Pfam" id="PF00006">
    <property type="entry name" value="ATP-synt_ab"/>
    <property type="match status" value="1"/>
</dbReference>
<dbReference type="Pfam" id="PF00306">
    <property type="entry name" value="ATP-synt_ab_C"/>
    <property type="match status" value="1"/>
</dbReference>
<dbReference type="Pfam" id="PF02874">
    <property type="entry name" value="ATP-synt_ab_N"/>
    <property type="match status" value="1"/>
</dbReference>
<dbReference type="SUPFAM" id="SSF47917">
    <property type="entry name" value="C-terminal domain of alpha and beta subunits of F1 ATP synthase"/>
    <property type="match status" value="1"/>
</dbReference>
<dbReference type="SUPFAM" id="SSF50615">
    <property type="entry name" value="N-terminal domain of alpha and beta subunits of F1 ATP synthase"/>
    <property type="match status" value="1"/>
</dbReference>
<dbReference type="SUPFAM" id="SSF52540">
    <property type="entry name" value="P-loop containing nucleoside triphosphate hydrolases"/>
    <property type="match status" value="1"/>
</dbReference>
<dbReference type="PROSITE" id="PS00152">
    <property type="entry name" value="ATPASE_ALPHA_BETA"/>
    <property type="match status" value="1"/>
</dbReference>
<keyword id="KW-0066">ATP synthesis</keyword>
<keyword id="KW-0067">ATP-binding</keyword>
<keyword id="KW-1003">Cell membrane</keyword>
<keyword id="KW-0139">CF(1)</keyword>
<keyword id="KW-0375">Hydrogen ion transport</keyword>
<keyword id="KW-0406">Ion transport</keyword>
<keyword id="KW-0472">Membrane</keyword>
<keyword id="KW-0547">Nucleotide-binding</keyword>
<keyword id="KW-1185">Reference proteome</keyword>
<keyword id="KW-1278">Translocase</keyword>
<keyword id="KW-0813">Transport</keyword>
<comment type="function">
    <text evidence="1">Produces ATP from ADP in the presence of a proton gradient across the membrane. The alpha chain is a regulatory subunit.</text>
</comment>
<comment type="catalytic activity">
    <reaction evidence="1">
        <text>ATP + H2O + 4 H(+)(in) = ADP + phosphate + 5 H(+)(out)</text>
        <dbReference type="Rhea" id="RHEA:57720"/>
        <dbReference type="ChEBI" id="CHEBI:15377"/>
        <dbReference type="ChEBI" id="CHEBI:15378"/>
        <dbReference type="ChEBI" id="CHEBI:30616"/>
        <dbReference type="ChEBI" id="CHEBI:43474"/>
        <dbReference type="ChEBI" id="CHEBI:456216"/>
        <dbReference type="EC" id="7.1.2.2"/>
    </reaction>
</comment>
<comment type="subunit">
    <text evidence="1">F-type ATPases have 2 components, CF(1) - the catalytic core - and CF(0) - the membrane proton channel. CF(1) has five subunits: alpha(3), beta(3), gamma(1), delta(1), epsilon(1). CF(0) has three main subunits: a(1), b(2) and c(9-12). The alpha and beta chains form an alternating ring which encloses part of the gamma chain. CF(1) is attached to CF(0) by a central stalk formed by the gamma and epsilon chains, while a peripheral stalk is formed by the delta and b chains.</text>
</comment>
<comment type="subcellular location">
    <subcellularLocation>
        <location evidence="1">Cell membrane</location>
        <topology evidence="1">Peripheral membrane protein</topology>
    </subcellularLocation>
</comment>
<comment type="similarity">
    <text evidence="1">Belongs to the ATPase alpha/beta chains family.</text>
</comment>
<accession>B8DWS4</accession>
<gene>
    <name evidence="1" type="primary">atpA</name>
    <name type="ordered locus">BLA_0632</name>
</gene>
<evidence type="ECO:0000255" key="1">
    <source>
        <dbReference type="HAMAP-Rule" id="MF_01346"/>
    </source>
</evidence>
<evidence type="ECO:0000256" key="2">
    <source>
        <dbReference type="SAM" id="MobiDB-lite"/>
    </source>
</evidence>
<feature type="chain" id="PRO_1000166520" description="ATP synthase subunit alpha">
    <location>
        <begin position="1"/>
        <end position="546"/>
    </location>
</feature>
<feature type="region of interest" description="Disordered" evidence="2">
    <location>
        <begin position="520"/>
        <end position="546"/>
    </location>
</feature>
<feature type="compositionally biased region" description="Basic and acidic residues" evidence="2">
    <location>
        <begin position="535"/>
        <end position="546"/>
    </location>
</feature>
<feature type="binding site" evidence="1">
    <location>
        <begin position="173"/>
        <end position="180"/>
    </location>
    <ligand>
        <name>ATP</name>
        <dbReference type="ChEBI" id="CHEBI:30616"/>
    </ligand>
</feature>
<feature type="site" description="Required for activity" evidence="1">
    <location>
        <position position="374"/>
    </location>
</feature>
<reference key="1">
    <citation type="journal article" date="2009" name="J. Bacteriol.">
        <title>Genome sequence of the probiotic bacterium Bifidobacterium animalis subsp. lactis AD011.</title>
        <authorList>
            <person name="Kim J.F."/>
            <person name="Jeong H."/>
            <person name="Yu D.S."/>
            <person name="Choi S.-H."/>
            <person name="Hur C.-G."/>
            <person name="Park M.-S."/>
            <person name="Yoon S.H."/>
            <person name="Kim D.-W."/>
            <person name="Ji G.E."/>
            <person name="Park H.-S."/>
            <person name="Oh T.K."/>
        </authorList>
    </citation>
    <scope>NUCLEOTIDE SEQUENCE [LARGE SCALE GENOMIC DNA]</scope>
    <source>
        <strain>AD011</strain>
    </source>
</reference>
<protein>
    <recommendedName>
        <fullName evidence="1">ATP synthase subunit alpha</fullName>
        <ecNumber evidence="1">7.1.2.2</ecNumber>
    </recommendedName>
    <alternativeName>
        <fullName evidence="1">ATP synthase F1 sector subunit alpha</fullName>
    </alternativeName>
    <alternativeName>
        <fullName evidence="1">F-ATPase subunit alpha</fullName>
    </alternativeName>
</protein>
<organism>
    <name type="scientific">Bifidobacterium animalis subsp. lactis (strain AD011)</name>
    <dbReference type="NCBI Taxonomy" id="442563"/>
    <lineage>
        <taxon>Bacteria</taxon>
        <taxon>Bacillati</taxon>
        <taxon>Actinomycetota</taxon>
        <taxon>Actinomycetes</taxon>
        <taxon>Bifidobacteriales</taxon>
        <taxon>Bifidobacteriaceae</taxon>
        <taxon>Bifidobacterium</taxon>
    </lineage>
</organism>